<proteinExistence type="inferred from homology"/>
<keyword id="KW-0963">Cytoplasm</keyword>
<keyword id="KW-0479">Metal-binding</keyword>
<keyword id="KW-0520">NAD</keyword>
<keyword id="KW-0560">Oxidoreductase</keyword>
<keyword id="KW-0862">Zinc</keyword>
<feature type="chain" id="PRO_1000130574" description="L-threonine 3-dehydrogenase">
    <location>
        <begin position="1"/>
        <end position="341"/>
    </location>
</feature>
<feature type="active site" description="Charge relay system" evidence="1">
    <location>
        <position position="40"/>
    </location>
</feature>
<feature type="active site" description="Charge relay system" evidence="1">
    <location>
        <position position="43"/>
    </location>
</feature>
<feature type="binding site" evidence="1">
    <location>
        <position position="38"/>
    </location>
    <ligand>
        <name>Zn(2+)</name>
        <dbReference type="ChEBI" id="CHEBI:29105"/>
        <label>1</label>
        <note>catalytic</note>
    </ligand>
</feature>
<feature type="binding site" evidence="1">
    <location>
        <position position="63"/>
    </location>
    <ligand>
        <name>Zn(2+)</name>
        <dbReference type="ChEBI" id="CHEBI:29105"/>
        <label>1</label>
        <note>catalytic</note>
    </ligand>
</feature>
<feature type="binding site" evidence="1">
    <location>
        <position position="64"/>
    </location>
    <ligand>
        <name>Zn(2+)</name>
        <dbReference type="ChEBI" id="CHEBI:29105"/>
        <label>1</label>
        <note>catalytic</note>
    </ligand>
</feature>
<feature type="binding site" evidence="1">
    <location>
        <position position="93"/>
    </location>
    <ligand>
        <name>Zn(2+)</name>
        <dbReference type="ChEBI" id="CHEBI:29105"/>
        <label>2</label>
    </ligand>
</feature>
<feature type="binding site" evidence="1">
    <location>
        <position position="96"/>
    </location>
    <ligand>
        <name>Zn(2+)</name>
        <dbReference type="ChEBI" id="CHEBI:29105"/>
        <label>2</label>
    </ligand>
</feature>
<feature type="binding site" evidence="1">
    <location>
        <position position="99"/>
    </location>
    <ligand>
        <name>Zn(2+)</name>
        <dbReference type="ChEBI" id="CHEBI:29105"/>
        <label>2</label>
    </ligand>
</feature>
<feature type="binding site" evidence="1">
    <location>
        <position position="107"/>
    </location>
    <ligand>
        <name>Zn(2+)</name>
        <dbReference type="ChEBI" id="CHEBI:29105"/>
        <label>2</label>
    </ligand>
</feature>
<feature type="binding site" evidence="1">
    <location>
        <position position="175"/>
    </location>
    <ligand>
        <name>NAD(+)</name>
        <dbReference type="ChEBI" id="CHEBI:57540"/>
    </ligand>
</feature>
<feature type="binding site" evidence="1">
    <location>
        <position position="195"/>
    </location>
    <ligand>
        <name>NAD(+)</name>
        <dbReference type="ChEBI" id="CHEBI:57540"/>
    </ligand>
</feature>
<feature type="binding site" evidence="1">
    <location>
        <position position="200"/>
    </location>
    <ligand>
        <name>NAD(+)</name>
        <dbReference type="ChEBI" id="CHEBI:57540"/>
    </ligand>
</feature>
<feature type="binding site" evidence="1">
    <location>
        <begin position="262"/>
        <end position="264"/>
    </location>
    <ligand>
        <name>NAD(+)</name>
        <dbReference type="ChEBI" id="CHEBI:57540"/>
    </ligand>
</feature>
<feature type="binding site" evidence="1">
    <location>
        <begin position="286"/>
        <end position="287"/>
    </location>
    <ligand>
        <name>NAD(+)</name>
        <dbReference type="ChEBI" id="CHEBI:57540"/>
    </ligand>
</feature>
<feature type="site" description="Important for catalytic activity for the proton relay mechanism but does not participate directly in the coordination of zinc atom" evidence="1">
    <location>
        <position position="148"/>
    </location>
</feature>
<evidence type="ECO:0000255" key="1">
    <source>
        <dbReference type="HAMAP-Rule" id="MF_00627"/>
    </source>
</evidence>
<organism>
    <name type="scientific">Yersinia pestis bv. Antiqua (strain Angola)</name>
    <dbReference type="NCBI Taxonomy" id="349746"/>
    <lineage>
        <taxon>Bacteria</taxon>
        <taxon>Pseudomonadati</taxon>
        <taxon>Pseudomonadota</taxon>
        <taxon>Gammaproteobacteria</taxon>
        <taxon>Enterobacterales</taxon>
        <taxon>Yersiniaceae</taxon>
        <taxon>Yersinia</taxon>
    </lineage>
</organism>
<reference key="1">
    <citation type="journal article" date="2010" name="J. Bacteriol.">
        <title>Genome sequence of the deep-rooted Yersinia pestis strain Angola reveals new insights into the evolution and pangenome of the plague bacterium.</title>
        <authorList>
            <person name="Eppinger M."/>
            <person name="Worsham P.L."/>
            <person name="Nikolich M.P."/>
            <person name="Riley D.R."/>
            <person name="Sebastian Y."/>
            <person name="Mou S."/>
            <person name="Achtman M."/>
            <person name="Lindler L.E."/>
            <person name="Ravel J."/>
        </authorList>
    </citation>
    <scope>NUCLEOTIDE SEQUENCE [LARGE SCALE GENOMIC DNA]</scope>
    <source>
        <strain>Angola</strain>
    </source>
</reference>
<accession>A9R685</accession>
<dbReference type="EC" id="1.1.1.103" evidence="1"/>
<dbReference type="EMBL" id="CP000901">
    <property type="protein sequence ID" value="ABX86038.1"/>
    <property type="molecule type" value="Genomic_DNA"/>
</dbReference>
<dbReference type="RefSeq" id="WP_002208981.1">
    <property type="nucleotide sequence ID" value="NZ_CP009935.1"/>
</dbReference>
<dbReference type="SMR" id="A9R685"/>
<dbReference type="GeneID" id="57974530"/>
<dbReference type="KEGG" id="ypg:YpAngola_A0066"/>
<dbReference type="PATRIC" id="fig|349746.12.peg.1009"/>
<dbReference type="UniPathway" id="UPA00046">
    <property type="reaction ID" value="UER00505"/>
</dbReference>
<dbReference type="GO" id="GO:0005737">
    <property type="term" value="C:cytoplasm"/>
    <property type="evidence" value="ECO:0007669"/>
    <property type="project" value="UniProtKB-SubCell"/>
</dbReference>
<dbReference type="GO" id="GO:0008743">
    <property type="term" value="F:L-threonine 3-dehydrogenase activity"/>
    <property type="evidence" value="ECO:0007669"/>
    <property type="project" value="UniProtKB-UniRule"/>
</dbReference>
<dbReference type="GO" id="GO:0008270">
    <property type="term" value="F:zinc ion binding"/>
    <property type="evidence" value="ECO:0007669"/>
    <property type="project" value="UniProtKB-UniRule"/>
</dbReference>
<dbReference type="GO" id="GO:0019518">
    <property type="term" value="P:L-threonine catabolic process to glycine"/>
    <property type="evidence" value="ECO:0007669"/>
    <property type="project" value="UniProtKB-UniPathway"/>
</dbReference>
<dbReference type="FunFam" id="3.40.50.720:FF:000059">
    <property type="entry name" value="L-threonine 3-dehydrogenase"/>
    <property type="match status" value="1"/>
</dbReference>
<dbReference type="Gene3D" id="3.90.180.10">
    <property type="entry name" value="Medium-chain alcohol dehydrogenases, catalytic domain"/>
    <property type="match status" value="1"/>
</dbReference>
<dbReference type="Gene3D" id="3.40.50.720">
    <property type="entry name" value="NAD(P)-binding Rossmann-like Domain"/>
    <property type="match status" value="1"/>
</dbReference>
<dbReference type="HAMAP" id="MF_00627">
    <property type="entry name" value="Thr_dehydrog"/>
    <property type="match status" value="1"/>
</dbReference>
<dbReference type="InterPro" id="IPR013149">
    <property type="entry name" value="ADH-like_C"/>
</dbReference>
<dbReference type="InterPro" id="IPR013154">
    <property type="entry name" value="ADH-like_N"/>
</dbReference>
<dbReference type="InterPro" id="IPR002328">
    <property type="entry name" value="ADH_Zn_CS"/>
</dbReference>
<dbReference type="InterPro" id="IPR011032">
    <property type="entry name" value="GroES-like_sf"/>
</dbReference>
<dbReference type="InterPro" id="IPR004627">
    <property type="entry name" value="L-Threonine_3-DHase"/>
</dbReference>
<dbReference type="InterPro" id="IPR036291">
    <property type="entry name" value="NAD(P)-bd_dom_sf"/>
</dbReference>
<dbReference type="InterPro" id="IPR020843">
    <property type="entry name" value="PKS_ER"/>
</dbReference>
<dbReference type="InterPro" id="IPR050129">
    <property type="entry name" value="Zn_alcohol_dh"/>
</dbReference>
<dbReference type="NCBIfam" id="NF003808">
    <property type="entry name" value="PRK05396.1"/>
    <property type="match status" value="1"/>
</dbReference>
<dbReference type="NCBIfam" id="TIGR00692">
    <property type="entry name" value="tdh"/>
    <property type="match status" value="1"/>
</dbReference>
<dbReference type="PANTHER" id="PTHR43401">
    <property type="entry name" value="L-THREONINE 3-DEHYDROGENASE"/>
    <property type="match status" value="1"/>
</dbReference>
<dbReference type="PANTHER" id="PTHR43401:SF2">
    <property type="entry name" value="L-THREONINE 3-DEHYDROGENASE"/>
    <property type="match status" value="1"/>
</dbReference>
<dbReference type="Pfam" id="PF08240">
    <property type="entry name" value="ADH_N"/>
    <property type="match status" value="1"/>
</dbReference>
<dbReference type="Pfam" id="PF00107">
    <property type="entry name" value="ADH_zinc_N"/>
    <property type="match status" value="1"/>
</dbReference>
<dbReference type="SMART" id="SM00829">
    <property type="entry name" value="PKS_ER"/>
    <property type="match status" value="1"/>
</dbReference>
<dbReference type="SUPFAM" id="SSF50129">
    <property type="entry name" value="GroES-like"/>
    <property type="match status" value="1"/>
</dbReference>
<dbReference type="SUPFAM" id="SSF51735">
    <property type="entry name" value="NAD(P)-binding Rossmann-fold domains"/>
    <property type="match status" value="1"/>
</dbReference>
<dbReference type="PROSITE" id="PS00059">
    <property type="entry name" value="ADH_ZINC"/>
    <property type="match status" value="1"/>
</dbReference>
<comment type="function">
    <text evidence="1">Catalyzes the NAD(+)-dependent oxidation of L-threonine to 2-amino-3-ketobutyrate.</text>
</comment>
<comment type="catalytic activity">
    <reaction evidence="1">
        <text>L-threonine + NAD(+) = (2S)-2-amino-3-oxobutanoate + NADH + H(+)</text>
        <dbReference type="Rhea" id="RHEA:13161"/>
        <dbReference type="ChEBI" id="CHEBI:15378"/>
        <dbReference type="ChEBI" id="CHEBI:57540"/>
        <dbReference type="ChEBI" id="CHEBI:57926"/>
        <dbReference type="ChEBI" id="CHEBI:57945"/>
        <dbReference type="ChEBI" id="CHEBI:78948"/>
        <dbReference type="EC" id="1.1.1.103"/>
    </reaction>
</comment>
<comment type="cofactor">
    <cofactor evidence="1">
        <name>Zn(2+)</name>
        <dbReference type="ChEBI" id="CHEBI:29105"/>
    </cofactor>
    <text evidence="1">Binds 2 Zn(2+) ions per subunit.</text>
</comment>
<comment type="pathway">
    <text evidence="1">Amino-acid degradation; L-threonine degradation via oxydo-reductase pathway; glycine from L-threonine: step 1/2.</text>
</comment>
<comment type="subunit">
    <text evidence="1">Homotetramer.</text>
</comment>
<comment type="subcellular location">
    <subcellularLocation>
        <location evidence="1">Cytoplasm</location>
    </subcellularLocation>
</comment>
<comment type="similarity">
    <text evidence="1">Belongs to the zinc-containing alcohol dehydrogenase family.</text>
</comment>
<protein>
    <recommendedName>
        <fullName evidence="1">L-threonine 3-dehydrogenase</fullName>
        <shortName evidence="1">TDH</shortName>
        <ecNumber evidence="1">1.1.1.103</ecNumber>
    </recommendedName>
</protein>
<name>TDH_YERPG</name>
<sequence length="341" mass="37303">MKALSKLKAEEGIWMTDVPQPELGHNDIMIKIRKTAICGTDVHIYNWDEWSQKTIPVPMVVGHEYVGEVVAIGQEVKGFNIGDRVSGEGHITCGHCRNCRGGRTHLCRNTVGVGVNRPGSFAEYLVIPAFNAFKIPDNISDELAAIFDPFGNAVHTALSFDLVGEDVLVSGAGPIGIMAAAVCKHVGARHVVIADVNEYRLDLARKMGVTRAVNVSKENLNDVMTELGMTEGFDVGLEMSGAPPAFRSLLNSMNHGGRIAMLGIPPSDMSIDWNQVIFKGLFIKGIYGREMFETWYKMAALIQSGLDLTPIITHRFPIDEFQQGFDAMRSGKSGKVVLSWD</sequence>
<gene>
    <name evidence="1" type="primary">tdh</name>
    <name type="ordered locus">YpAngola_A0066</name>
</gene>